<evidence type="ECO:0000255" key="1">
    <source>
        <dbReference type="HAMAP-Rule" id="MF_00397"/>
    </source>
</evidence>
<dbReference type="EC" id="2.4.2.52" evidence="1"/>
<dbReference type="EMBL" id="BA000034">
    <property type="protein sequence ID" value="BAC64121.1"/>
    <property type="molecule type" value="Genomic_DNA"/>
</dbReference>
<dbReference type="RefSeq" id="WP_011054506.1">
    <property type="nucleotide sequence ID" value="NC_004606.1"/>
</dbReference>
<dbReference type="KEGG" id="sps:SPs1026"/>
<dbReference type="HOGENOM" id="CLU_056179_1_0_9"/>
<dbReference type="GO" id="GO:0005524">
    <property type="term" value="F:ATP binding"/>
    <property type="evidence" value="ECO:0007669"/>
    <property type="project" value="UniProtKB-KW"/>
</dbReference>
<dbReference type="GO" id="GO:0046917">
    <property type="term" value="F:triphosphoribosyl-dephospho-CoA synthase activity"/>
    <property type="evidence" value="ECO:0007669"/>
    <property type="project" value="UniProtKB-UniRule"/>
</dbReference>
<dbReference type="GO" id="GO:0051191">
    <property type="term" value="P:prosthetic group biosynthetic process"/>
    <property type="evidence" value="ECO:0007669"/>
    <property type="project" value="TreeGrafter"/>
</dbReference>
<dbReference type="Gene3D" id="1.10.4200.10">
    <property type="entry name" value="Triphosphoribosyl-dephospho-CoA protein"/>
    <property type="match status" value="1"/>
</dbReference>
<dbReference type="HAMAP" id="MF_00397">
    <property type="entry name" value="CitG"/>
    <property type="match status" value="1"/>
</dbReference>
<dbReference type="InterPro" id="IPR002736">
    <property type="entry name" value="CitG"/>
</dbReference>
<dbReference type="InterPro" id="IPR017551">
    <property type="entry name" value="TriPribosyl-deP-CoA_syn_CitG"/>
</dbReference>
<dbReference type="NCBIfam" id="TIGR03125">
    <property type="entry name" value="citrate_citG"/>
    <property type="match status" value="1"/>
</dbReference>
<dbReference type="PANTHER" id="PTHR30201:SF2">
    <property type="entry name" value="2-(5''-TRIPHOSPHORIBOSYL)-3'-DEPHOSPHOCOENZYME-A SYNTHASE"/>
    <property type="match status" value="1"/>
</dbReference>
<dbReference type="PANTHER" id="PTHR30201">
    <property type="entry name" value="TRIPHOSPHORIBOSYL-DEPHOSPHO-COA SYNTHASE"/>
    <property type="match status" value="1"/>
</dbReference>
<dbReference type="Pfam" id="PF01874">
    <property type="entry name" value="CitG"/>
    <property type="match status" value="1"/>
</dbReference>
<accession>P0DA31</accession>
<accession>Q8K7F9</accession>
<reference key="1">
    <citation type="journal article" date="2003" name="Genome Res.">
        <title>Genome sequence of an M3 strain of Streptococcus pyogenes reveals a large-scale genomic rearrangement in invasive strains and new insights into phage evolution.</title>
        <authorList>
            <person name="Nakagawa I."/>
            <person name="Kurokawa K."/>
            <person name="Yamashita A."/>
            <person name="Nakata M."/>
            <person name="Tomiyasu Y."/>
            <person name="Okahashi N."/>
            <person name="Kawabata S."/>
            <person name="Yamazaki K."/>
            <person name="Shiba T."/>
            <person name="Yasunaga T."/>
            <person name="Hayashi H."/>
            <person name="Hattori M."/>
            <person name="Hamada S."/>
        </authorList>
    </citation>
    <scope>NUCLEOTIDE SEQUENCE [LARGE SCALE GENOMIC DNA]</scope>
    <source>
        <strain>SSI-1</strain>
    </source>
</reference>
<name>CITG_STRPQ</name>
<sequence>MTKAVLTSISQLALKALLYEVSLSPKPGLVDRFDNGAHDDMSFMTFIDSMIALSPFFQAYIETGFAYAKEEPLLLFNRLRQLGQKAEETMFCATQGINTHKGLNFSMALLLGATGAYLARTPHLMTDLGRFSKEDTLAICRLVKPMTAHLIQTDLGHLNTKKEFTYGEQLFVTYGIKGPRGEASEGFTTLTDHALPYFRQMISQNDPETSQLRLLVYLMSIVEDGNLIHRGGIEAWKGVKADMRLLLQQDLSTTDLRLALSSYNQCLINQHLSPGGAADLLALTFYFAFLEKLL</sequence>
<gene>
    <name evidence="1" type="primary">citG</name>
    <name type="ordered locus">SPs1026</name>
</gene>
<organism>
    <name type="scientific">Streptococcus pyogenes serotype M3 (strain SSI-1)</name>
    <dbReference type="NCBI Taxonomy" id="193567"/>
    <lineage>
        <taxon>Bacteria</taxon>
        <taxon>Bacillati</taxon>
        <taxon>Bacillota</taxon>
        <taxon>Bacilli</taxon>
        <taxon>Lactobacillales</taxon>
        <taxon>Streptococcaceae</taxon>
        <taxon>Streptococcus</taxon>
    </lineage>
</organism>
<proteinExistence type="inferred from homology"/>
<keyword id="KW-0067">ATP-binding</keyword>
<keyword id="KW-0547">Nucleotide-binding</keyword>
<keyword id="KW-0808">Transferase</keyword>
<comment type="catalytic activity">
    <reaction evidence="1">
        <text>3'-dephospho-CoA + ATP = 2'-(5''-triphospho-alpha-D-ribosyl)-3'-dephospho-CoA + adenine</text>
        <dbReference type="Rhea" id="RHEA:15117"/>
        <dbReference type="ChEBI" id="CHEBI:16708"/>
        <dbReference type="ChEBI" id="CHEBI:30616"/>
        <dbReference type="ChEBI" id="CHEBI:57328"/>
        <dbReference type="ChEBI" id="CHEBI:61378"/>
        <dbReference type="EC" id="2.4.2.52"/>
    </reaction>
</comment>
<comment type="similarity">
    <text evidence="1">Belongs to the CitG/MdcB family.</text>
</comment>
<feature type="chain" id="PRO_0000411303" description="Probable 2-(5''-triphosphoribosyl)-3'-dephosphocoenzyme-A synthase">
    <location>
        <begin position="1"/>
        <end position="294"/>
    </location>
</feature>
<protein>
    <recommendedName>
        <fullName evidence="1">Probable 2-(5''-triphosphoribosyl)-3'-dephosphocoenzyme-A synthase</fullName>
        <shortName evidence="1">2-(5''-triphosphoribosyl)-3'-dephospho-CoA synthase</shortName>
        <ecNumber evidence="1">2.4.2.52</ecNumber>
    </recommendedName>
</protein>